<feature type="chain" id="PRO_1000081021" description="Fluoride-specific ion channel FluC">
    <location>
        <begin position="1"/>
        <end position="124"/>
    </location>
</feature>
<feature type="transmembrane region" description="Helical" evidence="1">
    <location>
        <begin position="4"/>
        <end position="24"/>
    </location>
</feature>
<feature type="transmembrane region" description="Helical" evidence="1">
    <location>
        <begin position="35"/>
        <end position="55"/>
    </location>
</feature>
<feature type="transmembrane region" description="Helical" evidence="1">
    <location>
        <begin position="62"/>
        <end position="82"/>
    </location>
</feature>
<feature type="transmembrane region" description="Helical" evidence="1">
    <location>
        <begin position="95"/>
        <end position="115"/>
    </location>
</feature>
<feature type="binding site" evidence="1">
    <location>
        <position position="74"/>
    </location>
    <ligand>
        <name>Na(+)</name>
        <dbReference type="ChEBI" id="CHEBI:29101"/>
        <note>structural</note>
    </ligand>
</feature>
<feature type="binding site" evidence="1">
    <location>
        <position position="77"/>
    </location>
    <ligand>
        <name>Na(+)</name>
        <dbReference type="ChEBI" id="CHEBI:29101"/>
        <note>structural</note>
    </ligand>
</feature>
<name>FLUC_SHEPA</name>
<dbReference type="EMBL" id="CP000851">
    <property type="protein sequence ID" value="ABV87550.1"/>
    <property type="molecule type" value="Genomic_DNA"/>
</dbReference>
<dbReference type="RefSeq" id="WP_012155466.1">
    <property type="nucleotide sequence ID" value="NC_009901.1"/>
</dbReference>
<dbReference type="SMR" id="A8H4R3"/>
<dbReference type="STRING" id="398579.Spea_2230"/>
<dbReference type="KEGG" id="spl:Spea_2230"/>
<dbReference type="eggNOG" id="COG0239">
    <property type="taxonomic scope" value="Bacteria"/>
</dbReference>
<dbReference type="HOGENOM" id="CLU_114342_3_0_6"/>
<dbReference type="OrthoDB" id="9806299at2"/>
<dbReference type="Proteomes" id="UP000002608">
    <property type="component" value="Chromosome"/>
</dbReference>
<dbReference type="GO" id="GO:0005886">
    <property type="term" value="C:plasma membrane"/>
    <property type="evidence" value="ECO:0007669"/>
    <property type="project" value="UniProtKB-SubCell"/>
</dbReference>
<dbReference type="GO" id="GO:0062054">
    <property type="term" value="F:fluoride channel activity"/>
    <property type="evidence" value="ECO:0007669"/>
    <property type="project" value="UniProtKB-UniRule"/>
</dbReference>
<dbReference type="GO" id="GO:0046872">
    <property type="term" value="F:metal ion binding"/>
    <property type="evidence" value="ECO:0007669"/>
    <property type="project" value="UniProtKB-KW"/>
</dbReference>
<dbReference type="GO" id="GO:0140114">
    <property type="term" value="P:cellular detoxification of fluoride"/>
    <property type="evidence" value="ECO:0007669"/>
    <property type="project" value="UniProtKB-UniRule"/>
</dbReference>
<dbReference type="HAMAP" id="MF_00454">
    <property type="entry name" value="FluC"/>
    <property type="match status" value="1"/>
</dbReference>
<dbReference type="InterPro" id="IPR003691">
    <property type="entry name" value="FluC"/>
</dbReference>
<dbReference type="NCBIfam" id="TIGR00494">
    <property type="entry name" value="crcB"/>
    <property type="match status" value="1"/>
</dbReference>
<dbReference type="PANTHER" id="PTHR28259">
    <property type="entry name" value="FLUORIDE EXPORT PROTEIN 1-RELATED"/>
    <property type="match status" value="1"/>
</dbReference>
<dbReference type="PANTHER" id="PTHR28259:SF1">
    <property type="entry name" value="FLUORIDE EXPORT PROTEIN 1-RELATED"/>
    <property type="match status" value="1"/>
</dbReference>
<dbReference type="Pfam" id="PF02537">
    <property type="entry name" value="CRCB"/>
    <property type="match status" value="1"/>
</dbReference>
<reference key="1">
    <citation type="submission" date="2007-10" db="EMBL/GenBank/DDBJ databases">
        <title>Complete sequence of Shewanella pealeana ATCC 700345.</title>
        <authorList>
            <consortium name="US DOE Joint Genome Institute"/>
            <person name="Copeland A."/>
            <person name="Lucas S."/>
            <person name="Lapidus A."/>
            <person name="Barry K."/>
            <person name="Glavina del Rio T."/>
            <person name="Dalin E."/>
            <person name="Tice H."/>
            <person name="Pitluck S."/>
            <person name="Chertkov O."/>
            <person name="Brettin T."/>
            <person name="Bruce D."/>
            <person name="Detter J.C."/>
            <person name="Han C."/>
            <person name="Schmutz J."/>
            <person name="Larimer F."/>
            <person name="Land M."/>
            <person name="Hauser L."/>
            <person name="Kyrpides N."/>
            <person name="Kim E."/>
            <person name="Zhao J.-S.Z."/>
            <person name="Manno D."/>
            <person name="Hawari J."/>
            <person name="Richardson P."/>
        </authorList>
    </citation>
    <scope>NUCLEOTIDE SEQUENCE [LARGE SCALE GENOMIC DNA]</scope>
    <source>
        <strain>ATCC 700345 / ANG-SQ1</strain>
    </source>
</reference>
<proteinExistence type="inferred from homology"/>
<evidence type="ECO:0000255" key="1">
    <source>
        <dbReference type="HAMAP-Rule" id="MF_00454"/>
    </source>
</evidence>
<sequence length="124" mass="13328">MNNVLFVALGGSIGAVLRYLISLLMLQVFGSGFPFGTLVVNILGSFLMGVIFALGQVSELSPEFKAFIGVGMLGALTTFSTFSNETLLLMQQGYLVKAVFNVVVNVGVCIFVVYLGQQLVFSRF</sequence>
<protein>
    <recommendedName>
        <fullName evidence="1">Fluoride-specific ion channel FluC</fullName>
    </recommendedName>
</protein>
<comment type="function">
    <text evidence="1">Fluoride-specific ion channel. Important for reducing fluoride concentration in the cell, thus reducing its toxicity.</text>
</comment>
<comment type="catalytic activity">
    <reaction evidence="1">
        <text>fluoride(in) = fluoride(out)</text>
        <dbReference type="Rhea" id="RHEA:76159"/>
        <dbReference type="ChEBI" id="CHEBI:17051"/>
    </reaction>
    <physiologicalReaction direction="left-to-right" evidence="1">
        <dbReference type="Rhea" id="RHEA:76160"/>
    </physiologicalReaction>
</comment>
<comment type="activity regulation">
    <text evidence="1">Na(+) is not transported, but it plays an essential structural role and its presence is essential for fluoride channel function.</text>
</comment>
<comment type="subcellular location">
    <subcellularLocation>
        <location evidence="1">Cell inner membrane</location>
        <topology evidence="1">Multi-pass membrane protein</topology>
    </subcellularLocation>
</comment>
<comment type="similarity">
    <text evidence="1">Belongs to the fluoride channel Fluc/FEX (TC 1.A.43) family.</text>
</comment>
<organism>
    <name type="scientific">Shewanella pealeana (strain ATCC 700345 / ANG-SQ1)</name>
    <dbReference type="NCBI Taxonomy" id="398579"/>
    <lineage>
        <taxon>Bacteria</taxon>
        <taxon>Pseudomonadati</taxon>
        <taxon>Pseudomonadota</taxon>
        <taxon>Gammaproteobacteria</taxon>
        <taxon>Alteromonadales</taxon>
        <taxon>Shewanellaceae</taxon>
        <taxon>Shewanella</taxon>
    </lineage>
</organism>
<keyword id="KW-0997">Cell inner membrane</keyword>
<keyword id="KW-1003">Cell membrane</keyword>
<keyword id="KW-0407">Ion channel</keyword>
<keyword id="KW-0406">Ion transport</keyword>
<keyword id="KW-0472">Membrane</keyword>
<keyword id="KW-0479">Metal-binding</keyword>
<keyword id="KW-1185">Reference proteome</keyword>
<keyword id="KW-0915">Sodium</keyword>
<keyword id="KW-0812">Transmembrane</keyword>
<keyword id="KW-1133">Transmembrane helix</keyword>
<keyword id="KW-0813">Transport</keyword>
<accession>A8H4R3</accession>
<gene>
    <name evidence="1" type="primary">fluC</name>
    <name evidence="1" type="synonym">crcB</name>
    <name type="ordered locus">Spea_2230</name>
</gene>